<protein>
    <recommendedName>
        <fullName evidence="1">Large ribosomal subunit protein bL9</fullName>
    </recommendedName>
    <alternativeName>
        <fullName evidence="2">50S ribosomal protein L9</fullName>
    </alternativeName>
</protein>
<name>RL9_ACIB5</name>
<comment type="function">
    <text evidence="1">Binds to the 23S rRNA.</text>
</comment>
<comment type="similarity">
    <text evidence="1">Belongs to the bacterial ribosomal protein bL9 family.</text>
</comment>
<gene>
    <name evidence="1" type="primary">rplI</name>
    <name type="ordered locus">AB57_2511</name>
</gene>
<evidence type="ECO:0000255" key="1">
    <source>
        <dbReference type="HAMAP-Rule" id="MF_00503"/>
    </source>
</evidence>
<evidence type="ECO:0000305" key="2"/>
<evidence type="ECO:0007829" key="3">
    <source>
        <dbReference type="PDB" id="7M4V"/>
    </source>
</evidence>
<dbReference type="EMBL" id="CP001182">
    <property type="protein sequence ID" value="ACJ42620.1"/>
    <property type="molecule type" value="Genomic_DNA"/>
</dbReference>
<dbReference type="RefSeq" id="WP_000382591.1">
    <property type="nucleotide sequence ID" value="NC_011586.2"/>
</dbReference>
<dbReference type="PDB" id="6V39">
    <property type="method" value="EM"/>
    <property type="resolution" value="3.04 A"/>
    <property type="chains" value="H=1-148"/>
</dbReference>
<dbReference type="PDB" id="6V3A">
    <property type="method" value="EM"/>
    <property type="resolution" value="2.82 A"/>
    <property type="chains" value="H=1-148"/>
</dbReference>
<dbReference type="PDB" id="6V3B">
    <property type="method" value="EM"/>
    <property type="resolution" value="2.91 A"/>
    <property type="chains" value="H=1-148"/>
</dbReference>
<dbReference type="PDB" id="6V3D">
    <property type="method" value="EM"/>
    <property type="resolution" value="2.95 A"/>
    <property type="chains" value="H=1-148"/>
</dbReference>
<dbReference type="PDB" id="7M4V">
    <property type="method" value="EM"/>
    <property type="resolution" value="2.54 A"/>
    <property type="chains" value="H=1-148"/>
</dbReference>
<dbReference type="PDB" id="7M4W">
    <property type="method" value="EM"/>
    <property type="resolution" value="2.55 A"/>
    <property type="chains" value="H=1-148"/>
</dbReference>
<dbReference type="PDB" id="7M4X">
    <property type="method" value="EM"/>
    <property type="resolution" value="2.66 A"/>
    <property type="chains" value="H=1-148"/>
</dbReference>
<dbReference type="PDB" id="7M4Y">
    <property type="method" value="EM"/>
    <property type="resolution" value="2.50 A"/>
    <property type="chains" value="H=1-148"/>
</dbReference>
<dbReference type="PDB" id="7M4Z">
    <property type="method" value="EM"/>
    <property type="resolution" value="2.92 A"/>
    <property type="chains" value="H=1-148"/>
</dbReference>
<dbReference type="PDB" id="7RYF">
    <property type="method" value="EM"/>
    <property type="resolution" value="2.65 A"/>
    <property type="chains" value="H=1-148"/>
</dbReference>
<dbReference type="PDB" id="7RYG">
    <property type="method" value="EM"/>
    <property type="resolution" value="2.38 A"/>
    <property type="chains" value="H=1-148"/>
</dbReference>
<dbReference type="PDB" id="7RYH">
    <property type="method" value="EM"/>
    <property type="resolution" value="2.43 A"/>
    <property type="chains" value="H=1-148"/>
</dbReference>
<dbReference type="PDB" id="7UVV">
    <property type="method" value="EM"/>
    <property type="resolution" value="2.50 A"/>
    <property type="chains" value="H=1-148"/>
</dbReference>
<dbReference type="PDB" id="7UVW">
    <property type="method" value="EM"/>
    <property type="resolution" value="2.37 A"/>
    <property type="chains" value="H=1-148"/>
</dbReference>
<dbReference type="PDB" id="7UVX">
    <property type="method" value="EM"/>
    <property type="resolution" value="2.35 A"/>
    <property type="chains" value="H=1-148"/>
</dbReference>
<dbReference type="PDB" id="7UVY">
    <property type="method" value="EM"/>
    <property type="resolution" value="2.39 A"/>
    <property type="chains" value="H=1-148"/>
</dbReference>
<dbReference type="PDB" id="7UVZ">
    <property type="method" value="EM"/>
    <property type="resolution" value="2.21 A"/>
    <property type="chains" value="H=1-148"/>
</dbReference>
<dbReference type="PDB" id="7UW1">
    <property type="method" value="EM"/>
    <property type="resolution" value="2.21 A"/>
    <property type="chains" value="H=1-148"/>
</dbReference>
<dbReference type="PDBsum" id="6V39"/>
<dbReference type="PDBsum" id="6V3A"/>
<dbReference type="PDBsum" id="6V3B"/>
<dbReference type="PDBsum" id="6V3D"/>
<dbReference type="PDBsum" id="7M4V"/>
<dbReference type="PDBsum" id="7M4W"/>
<dbReference type="PDBsum" id="7M4X"/>
<dbReference type="PDBsum" id="7M4Y"/>
<dbReference type="PDBsum" id="7M4Z"/>
<dbReference type="PDBsum" id="7RYF"/>
<dbReference type="PDBsum" id="7RYG"/>
<dbReference type="PDBsum" id="7RYH"/>
<dbReference type="PDBsum" id="7UVV"/>
<dbReference type="PDBsum" id="7UVW"/>
<dbReference type="PDBsum" id="7UVX"/>
<dbReference type="PDBsum" id="7UVY"/>
<dbReference type="PDBsum" id="7UVZ"/>
<dbReference type="PDBsum" id="7UW1"/>
<dbReference type="EMDB" id="EMD-21030"/>
<dbReference type="EMDB" id="EMD-21031"/>
<dbReference type="EMDB" id="EMD-21032"/>
<dbReference type="EMDB" id="EMD-21033"/>
<dbReference type="EMDB" id="EMD-23667"/>
<dbReference type="EMDB" id="EMD-23668"/>
<dbReference type="EMDB" id="EMD-23669"/>
<dbReference type="EMDB" id="EMD-23670"/>
<dbReference type="EMDB" id="EMD-23671"/>
<dbReference type="EMDB" id="EMD-24738"/>
<dbReference type="EMDB" id="EMD-24739"/>
<dbReference type="EMDB" id="EMD-24740"/>
<dbReference type="EMDB" id="EMD-26817"/>
<dbReference type="EMDB" id="EMD-26818"/>
<dbReference type="EMDB" id="EMD-26819"/>
<dbReference type="EMDB" id="EMD-26820"/>
<dbReference type="EMDB" id="EMD-26821"/>
<dbReference type="EMDB" id="EMD-26822"/>
<dbReference type="SMR" id="B7IBC3"/>
<dbReference type="IntAct" id="B7IBC3">
    <property type="interactions" value="2"/>
</dbReference>
<dbReference type="GeneID" id="92894415"/>
<dbReference type="KEGG" id="abn:AB57_2511"/>
<dbReference type="HOGENOM" id="CLU_078938_4_1_6"/>
<dbReference type="Proteomes" id="UP000007094">
    <property type="component" value="Chromosome"/>
</dbReference>
<dbReference type="GO" id="GO:1990904">
    <property type="term" value="C:ribonucleoprotein complex"/>
    <property type="evidence" value="ECO:0007669"/>
    <property type="project" value="UniProtKB-KW"/>
</dbReference>
<dbReference type="GO" id="GO:0005840">
    <property type="term" value="C:ribosome"/>
    <property type="evidence" value="ECO:0007669"/>
    <property type="project" value="UniProtKB-KW"/>
</dbReference>
<dbReference type="GO" id="GO:0019843">
    <property type="term" value="F:rRNA binding"/>
    <property type="evidence" value="ECO:0007669"/>
    <property type="project" value="UniProtKB-UniRule"/>
</dbReference>
<dbReference type="GO" id="GO:0003735">
    <property type="term" value="F:structural constituent of ribosome"/>
    <property type="evidence" value="ECO:0007669"/>
    <property type="project" value="InterPro"/>
</dbReference>
<dbReference type="GO" id="GO:0006412">
    <property type="term" value="P:translation"/>
    <property type="evidence" value="ECO:0007669"/>
    <property type="project" value="UniProtKB-UniRule"/>
</dbReference>
<dbReference type="Gene3D" id="3.10.430.100">
    <property type="entry name" value="Ribosomal protein L9, C-terminal domain"/>
    <property type="match status" value="1"/>
</dbReference>
<dbReference type="Gene3D" id="3.40.5.10">
    <property type="entry name" value="Ribosomal protein L9, N-terminal domain"/>
    <property type="match status" value="1"/>
</dbReference>
<dbReference type="HAMAP" id="MF_00503">
    <property type="entry name" value="Ribosomal_bL9"/>
    <property type="match status" value="1"/>
</dbReference>
<dbReference type="InterPro" id="IPR000244">
    <property type="entry name" value="Ribosomal_bL9"/>
</dbReference>
<dbReference type="InterPro" id="IPR009027">
    <property type="entry name" value="Ribosomal_bL9/RNase_H1_N"/>
</dbReference>
<dbReference type="InterPro" id="IPR020594">
    <property type="entry name" value="Ribosomal_bL9_bac/chp"/>
</dbReference>
<dbReference type="InterPro" id="IPR020069">
    <property type="entry name" value="Ribosomal_bL9_C"/>
</dbReference>
<dbReference type="InterPro" id="IPR036791">
    <property type="entry name" value="Ribosomal_bL9_C_sf"/>
</dbReference>
<dbReference type="InterPro" id="IPR020070">
    <property type="entry name" value="Ribosomal_bL9_N"/>
</dbReference>
<dbReference type="InterPro" id="IPR036935">
    <property type="entry name" value="Ribosomal_bL9_N_sf"/>
</dbReference>
<dbReference type="NCBIfam" id="TIGR00158">
    <property type="entry name" value="L9"/>
    <property type="match status" value="1"/>
</dbReference>
<dbReference type="PANTHER" id="PTHR21368">
    <property type="entry name" value="50S RIBOSOMAL PROTEIN L9"/>
    <property type="match status" value="1"/>
</dbReference>
<dbReference type="Pfam" id="PF03948">
    <property type="entry name" value="Ribosomal_L9_C"/>
    <property type="match status" value="1"/>
</dbReference>
<dbReference type="Pfam" id="PF01281">
    <property type="entry name" value="Ribosomal_L9_N"/>
    <property type="match status" value="1"/>
</dbReference>
<dbReference type="SUPFAM" id="SSF55658">
    <property type="entry name" value="L9 N-domain-like"/>
    <property type="match status" value="1"/>
</dbReference>
<dbReference type="SUPFAM" id="SSF55653">
    <property type="entry name" value="Ribosomal protein L9 C-domain"/>
    <property type="match status" value="1"/>
</dbReference>
<dbReference type="PROSITE" id="PS00651">
    <property type="entry name" value="RIBOSOMAL_L9"/>
    <property type="match status" value="1"/>
</dbReference>
<accession>B7IBC3</accession>
<keyword id="KW-0002">3D-structure</keyword>
<keyword id="KW-0687">Ribonucleoprotein</keyword>
<keyword id="KW-0689">Ribosomal protein</keyword>
<keyword id="KW-0694">RNA-binding</keyword>
<keyword id="KW-0699">rRNA-binding</keyword>
<sequence length="148" mass="15781">MDVILLQRIKNLGKLGDKVSVKAGYGRNFLIPQGKAVAATEANTAAFEARRAELEKQEAEVLAAAQARAEQLNEVNIVITAKAGDEGKLFGSIGTRDIADALTNAGLTVDRAEVRLPNGALRHTGEFNIAIQLHHDVVAEVLVTIVSE</sequence>
<organism>
    <name type="scientific">Acinetobacter baumannii (strain AB0057)</name>
    <dbReference type="NCBI Taxonomy" id="480119"/>
    <lineage>
        <taxon>Bacteria</taxon>
        <taxon>Pseudomonadati</taxon>
        <taxon>Pseudomonadota</taxon>
        <taxon>Gammaproteobacteria</taxon>
        <taxon>Moraxellales</taxon>
        <taxon>Moraxellaceae</taxon>
        <taxon>Acinetobacter</taxon>
        <taxon>Acinetobacter calcoaceticus/baumannii complex</taxon>
    </lineage>
</organism>
<feature type="chain" id="PRO_1000126851" description="Large ribosomal subunit protein bL9">
    <location>
        <begin position="1"/>
        <end position="148"/>
    </location>
</feature>
<feature type="strand" evidence="3">
    <location>
        <begin position="2"/>
        <end position="7"/>
    </location>
</feature>
<feature type="turn" evidence="3">
    <location>
        <begin position="10"/>
        <end position="12"/>
    </location>
</feature>
<feature type="strand" evidence="3">
    <location>
        <begin position="18"/>
        <end position="20"/>
    </location>
</feature>
<feature type="helix" evidence="3">
    <location>
        <begin position="23"/>
        <end position="28"/>
    </location>
</feature>
<feature type="helix" evidence="3">
    <location>
        <begin position="30"/>
        <end position="33"/>
    </location>
</feature>
<feature type="strand" evidence="3">
    <location>
        <begin position="35"/>
        <end position="38"/>
    </location>
</feature>
<feature type="helix" evidence="3">
    <location>
        <begin position="41"/>
        <end position="59"/>
    </location>
</feature>
<reference key="1">
    <citation type="journal article" date="2008" name="J. Bacteriol.">
        <title>Comparative genome sequence analysis of multidrug-resistant Acinetobacter baumannii.</title>
        <authorList>
            <person name="Adams M.D."/>
            <person name="Goglin K."/>
            <person name="Molyneaux N."/>
            <person name="Hujer K.M."/>
            <person name="Lavender H."/>
            <person name="Jamison J.J."/>
            <person name="MacDonald I.J."/>
            <person name="Martin K.M."/>
            <person name="Russo T."/>
            <person name="Campagnari A.A."/>
            <person name="Hujer A.M."/>
            <person name="Bonomo R.A."/>
            <person name="Gill S.R."/>
        </authorList>
    </citation>
    <scope>NUCLEOTIDE SEQUENCE [LARGE SCALE GENOMIC DNA]</scope>
    <source>
        <strain>AB0057</strain>
    </source>
</reference>
<proteinExistence type="evidence at protein level"/>